<name>YIGE_ECOLI</name>
<keyword id="KW-1185">Reference proteome</keyword>
<proteinExistence type="predicted"/>
<gene>
    <name type="primary">yigE</name>
    <name type="ordered locus">b4482</name>
    <name type="ordered locus">JW5591</name>
</gene>
<reference key="1">
    <citation type="submission" date="1993-01" db="EMBL/GenBank/DDBJ databases">
        <authorList>
            <person name="Ohmori H."/>
        </authorList>
    </citation>
    <scope>NUCLEOTIDE SEQUENCE [GENOMIC DNA]</scope>
    <source>
        <strain>K12</strain>
    </source>
</reference>
<reference key="2">
    <citation type="journal article" date="1992" name="Science">
        <title>Analysis of the Escherichia coli genome: DNA sequence of the region from 84.5 to 86.5 minutes.</title>
        <authorList>
            <person name="Daniels D.L."/>
            <person name="Plunkett G. III"/>
            <person name="Burland V.D."/>
            <person name="Blattner F.R."/>
        </authorList>
    </citation>
    <scope>NUCLEOTIDE SEQUENCE [LARGE SCALE GENOMIC DNA]</scope>
    <source>
        <strain>K12 / MG1655 / ATCC 47076</strain>
    </source>
</reference>
<reference key="3">
    <citation type="journal article" date="1997" name="Science">
        <title>The complete genome sequence of Escherichia coli K-12.</title>
        <authorList>
            <person name="Blattner F.R."/>
            <person name="Plunkett G. III"/>
            <person name="Bloch C.A."/>
            <person name="Perna N.T."/>
            <person name="Burland V."/>
            <person name="Riley M."/>
            <person name="Collado-Vides J."/>
            <person name="Glasner J.D."/>
            <person name="Rode C.K."/>
            <person name="Mayhew G.F."/>
            <person name="Gregor J."/>
            <person name="Davis N.W."/>
            <person name="Kirkpatrick H.A."/>
            <person name="Goeden M.A."/>
            <person name="Rose D.J."/>
            <person name="Mau B."/>
            <person name="Shao Y."/>
        </authorList>
    </citation>
    <scope>NUCLEOTIDE SEQUENCE [LARGE SCALE GENOMIC DNA]</scope>
    <source>
        <strain>K12 / MG1655 / ATCC 47076</strain>
    </source>
</reference>
<reference key="4">
    <citation type="journal article" date="2006" name="Nucleic Acids Res.">
        <title>Escherichia coli K-12: a cooperatively developed annotation snapshot -- 2005.</title>
        <authorList>
            <person name="Riley M."/>
            <person name="Abe T."/>
            <person name="Arnaud M.B."/>
            <person name="Berlyn M.K.B."/>
            <person name="Blattner F.R."/>
            <person name="Chaudhuri R.R."/>
            <person name="Glasner J.D."/>
            <person name="Horiuchi T."/>
            <person name="Keseler I.M."/>
            <person name="Kosuge T."/>
            <person name="Mori H."/>
            <person name="Perna N.T."/>
            <person name="Plunkett G. III"/>
            <person name="Rudd K.E."/>
            <person name="Serres M.H."/>
            <person name="Thomas G.H."/>
            <person name="Thomson N.R."/>
            <person name="Wishart D."/>
            <person name="Wanner B.L."/>
        </authorList>
    </citation>
    <scope>SEQUENCE REVISION</scope>
</reference>
<reference key="5">
    <citation type="journal article" date="2006" name="Mol. Syst. Biol.">
        <title>Highly accurate genome sequences of Escherichia coli K-12 strains MG1655 and W3110.</title>
        <authorList>
            <person name="Hayashi K."/>
            <person name="Morooka N."/>
            <person name="Yamamoto Y."/>
            <person name="Fujita K."/>
            <person name="Isono K."/>
            <person name="Choi S."/>
            <person name="Ohtsubo E."/>
            <person name="Baba T."/>
            <person name="Wanner B.L."/>
            <person name="Mori H."/>
            <person name="Horiuchi T."/>
        </authorList>
    </citation>
    <scope>NUCLEOTIDE SEQUENCE [LARGE SCALE GENOMIC DNA]</scope>
    <source>
        <strain>K12 / W3110 / ATCC 27325 / DSM 5911</strain>
    </source>
</reference>
<feature type="chain" id="PRO_0000169653" description="Uncharacterized protein YigE">
    <location>
        <begin position="1"/>
        <end position="254"/>
    </location>
</feature>
<protein>
    <recommendedName>
        <fullName>Uncharacterized protein YigE</fullName>
    </recommendedName>
</protein>
<comment type="sequence caution" evidence="1">
    <conflict type="frameshift">
        <sequence resource="EMBL-CDS" id="AAA67610"/>
    </conflict>
    <text>Produces two separate ORFs.</text>
</comment>
<comment type="sequence caution" evidence="1">
    <conflict type="frameshift">
        <sequence resource="EMBL-CDS" id="AAA67611"/>
    </conflict>
    <text>Produces two separate ORFs.</text>
</comment>
<evidence type="ECO:0000305" key="1"/>
<accession>P27840</accession>
<accession>P27839</accession>
<accession>P76759</accession>
<accession>P76760</accession>
<accession>Q2M8C0</accession>
<accession>Q47713</accession>
<organism>
    <name type="scientific">Escherichia coli (strain K12)</name>
    <dbReference type="NCBI Taxonomy" id="83333"/>
    <lineage>
        <taxon>Bacteria</taxon>
        <taxon>Pseudomonadati</taxon>
        <taxon>Pseudomonadota</taxon>
        <taxon>Gammaproteobacteria</taxon>
        <taxon>Enterobacterales</taxon>
        <taxon>Enterobacteriaceae</taxon>
        <taxon>Escherichia</taxon>
    </lineage>
</organism>
<dbReference type="EMBL" id="L02122">
    <property type="protein sequence ID" value="AAD15037.1"/>
    <property type="molecule type" value="Genomic_DNA"/>
</dbReference>
<dbReference type="EMBL" id="M87049">
    <property type="protein sequence ID" value="AAA67611.1"/>
    <property type="status" value="ALT_FRAME"/>
    <property type="molecule type" value="Genomic_DNA"/>
</dbReference>
<dbReference type="EMBL" id="M87049">
    <property type="protein sequence ID" value="AAA67610.1"/>
    <property type="status" value="ALT_FRAME"/>
    <property type="molecule type" value="Genomic_DNA"/>
</dbReference>
<dbReference type="EMBL" id="U00096">
    <property type="protein sequence ID" value="AAT48219.1"/>
    <property type="molecule type" value="Genomic_DNA"/>
</dbReference>
<dbReference type="EMBL" id="AP009048">
    <property type="protein sequence ID" value="BAE77486.1"/>
    <property type="molecule type" value="Genomic_DNA"/>
</dbReference>
<dbReference type="PIR" id="S30742">
    <property type="entry name" value="S30742"/>
</dbReference>
<dbReference type="RefSeq" id="WP_000951133.1">
    <property type="nucleotide sequence ID" value="NZ_SSZK01000025.1"/>
</dbReference>
<dbReference type="RefSeq" id="YP_026261.1">
    <property type="nucleotide sequence ID" value="NC_000913.3"/>
</dbReference>
<dbReference type="SMR" id="P27840"/>
<dbReference type="BioGRID" id="4263339">
    <property type="interactions" value="13"/>
</dbReference>
<dbReference type="FunCoup" id="P27840">
    <property type="interactions" value="120"/>
</dbReference>
<dbReference type="STRING" id="511145.b4482"/>
<dbReference type="PaxDb" id="511145-b4482"/>
<dbReference type="EnsemblBacteria" id="AAT48219">
    <property type="protein sequence ID" value="AAT48219"/>
    <property type="gene ID" value="b4482"/>
</dbReference>
<dbReference type="GeneID" id="2847679"/>
<dbReference type="KEGG" id="ecj:JW5591"/>
<dbReference type="KEGG" id="eco:b4482"/>
<dbReference type="KEGG" id="ecoc:C3026_20645"/>
<dbReference type="PATRIC" id="fig|511145.12.peg.3930"/>
<dbReference type="EchoBASE" id="EB1430"/>
<dbReference type="eggNOG" id="COG3698">
    <property type="taxonomic scope" value="Bacteria"/>
</dbReference>
<dbReference type="HOGENOM" id="CLU_076045_1_0_6"/>
<dbReference type="InParanoid" id="P27840"/>
<dbReference type="OMA" id="QSGPMLI"/>
<dbReference type="OrthoDB" id="5515706at2"/>
<dbReference type="PhylomeDB" id="P27840"/>
<dbReference type="BioCyc" id="EcoCyc:EG11462-MONOMER"/>
<dbReference type="PRO" id="PR:P27840"/>
<dbReference type="Proteomes" id="UP000000625">
    <property type="component" value="Chromosome"/>
</dbReference>
<dbReference type="InterPro" id="IPR018711">
    <property type="entry name" value="NAGPA"/>
</dbReference>
<dbReference type="Pfam" id="PF09992">
    <property type="entry name" value="NAGPA"/>
    <property type="match status" value="1"/>
</dbReference>
<sequence length="254" mass="27908">MAHQLLIGKGMITLNLKRIFLALTLLPLFAVAADDCALSDPTLTVQAYTVNPQTERVKMYWQKANGEAWGTLHALLADINSQGQVQMAMNGGIYDESYAPLGLYIENGQQKVALNLASGEGNFFIRPGGVFYVAGDKVGIVRLDAFKTSKEIQFAVQSGPMLMENGVINPRIHPNVASSKIRNGVGINKHGNAVFLLSQQATNFYDFACYAKAKLNVEQLLYLDGTISHMYMKGGAIPWQRYPFVTMISVERKG</sequence>